<accession>P84270</accession>
<keyword id="KW-0878">Amphibian defense peptide</keyword>
<keyword id="KW-0903">Direct protein sequencing</keyword>
<keyword id="KW-0964">Secreted</keyword>
<reference evidence="2" key="1">
    <citation type="journal article" date="2001" name="Rapid Commun. Mass Spectrom.">
        <title>Bioactive dahlein peptides from the skin secretions of the Australian aquatic frog Litoria dahlii: sequence determination by electrospray mass spectrometry.</title>
        <authorList>
            <person name="Wegener K.L."/>
            <person name="Brinkworth C.S."/>
            <person name="Bowie J.H."/>
            <person name="Wallace J.C."/>
            <person name="Tyler M.J."/>
        </authorList>
    </citation>
    <scope>PROTEIN SEQUENCE</scope>
    <scope>FUNCTION</scope>
    <scope>SUBCELLULAR LOCATION</scope>
    <scope>TISSUE SPECIFICITY</scope>
    <scope>MASS SPECTROMETRY</scope>
    <source>
        <tissue evidence="1">Skin secretion</tissue>
    </source>
</reference>
<comment type="function">
    <text evidence="1">Has no antimicrobial activity. Strongly inhibits the formation of NO by neuronal nitric oxide synthase at micromolar concentrations.</text>
</comment>
<comment type="subcellular location">
    <subcellularLocation>
        <location evidence="1">Secreted</location>
    </subcellularLocation>
</comment>
<comment type="tissue specificity">
    <text evidence="1">Expressed by the skin dorsal glands.</text>
</comment>
<comment type="mass spectrometry" mass="2139.0" method="Electrospray" evidence="1"/>
<name>DAH54_RANDH</name>
<protein>
    <recommendedName>
        <fullName>Dahlein-5.4</fullName>
    </recommendedName>
</protein>
<evidence type="ECO:0000269" key="1">
    <source>
    </source>
</evidence>
<evidence type="ECO:0000305" key="2"/>
<organism>
    <name type="scientific">Ranoidea dahlii</name>
    <name type="common">Dahl's aquatic frog</name>
    <name type="synonym">Litoria dahlii</name>
    <dbReference type="NCBI Taxonomy" id="299727"/>
    <lineage>
        <taxon>Eukaryota</taxon>
        <taxon>Metazoa</taxon>
        <taxon>Chordata</taxon>
        <taxon>Craniata</taxon>
        <taxon>Vertebrata</taxon>
        <taxon>Euteleostomi</taxon>
        <taxon>Amphibia</taxon>
        <taxon>Batrachia</taxon>
        <taxon>Anura</taxon>
        <taxon>Neobatrachia</taxon>
        <taxon>Hyloidea</taxon>
        <taxon>Hylidae</taxon>
        <taxon>Pelodryadinae</taxon>
        <taxon>Ranoidea</taxon>
    </lineage>
</organism>
<dbReference type="GO" id="GO:0005576">
    <property type="term" value="C:extracellular region"/>
    <property type="evidence" value="ECO:0000314"/>
    <property type="project" value="UniProtKB"/>
</dbReference>
<dbReference type="GO" id="GO:0030235">
    <property type="term" value="F:nitric-oxide synthase regulator activity"/>
    <property type="evidence" value="ECO:0000314"/>
    <property type="project" value="UniProtKB"/>
</dbReference>
<dbReference type="GO" id="GO:0006952">
    <property type="term" value="P:defense response"/>
    <property type="evidence" value="ECO:0007669"/>
    <property type="project" value="UniProtKB-KW"/>
</dbReference>
<dbReference type="GO" id="GO:0051001">
    <property type="term" value="P:negative regulation of nitric-oxide synthase activity"/>
    <property type="evidence" value="ECO:0000314"/>
    <property type="project" value="UniProtKB"/>
</dbReference>
<dbReference type="InterPro" id="IPR032021">
    <property type="entry name" value="Frog_Litoria"/>
</dbReference>
<dbReference type="Pfam" id="PF16049">
    <property type="entry name" value="Antimicrobial24"/>
    <property type="match status" value="1"/>
</dbReference>
<sequence length="21" mass="2142">GLLGSIGKVLGGYLAEKLKPK</sequence>
<feature type="peptide" id="PRO_0000043780" description="Dahlein-5.4">
    <location>
        <begin position="1"/>
        <end position="21"/>
    </location>
</feature>
<proteinExistence type="evidence at protein level"/>